<proteinExistence type="inferred from homology"/>
<accession>B1AI06</accession>
<dbReference type="EC" id="2.7.4.9" evidence="1"/>
<dbReference type="EMBL" id="CP000942">
    <property type="protein sequence ID" value="ACA32979.1"/>
    <property type="molecule type" value="Genomic_DNA"/>
</dbReference>
<dbReference type="RefSeq" id="WP_006688582.1">
    <property type="nucleotide sequence ID" value="NC_010503.1"/>
</dbReference>
<dbReference type="SMR" id="B1AI06"/>
<dbReference type="GeneID" id="29672189"/>
<dbReference type="KEGG" id="upa:UPA3_0020"/>
<dbReference type="HOGENOM" id="CLU_049131_0_2_14"/>
<dbReference type="Proteomes" id="UP000002162">
    <property type="component" value="Chromosome"/>
</dbReference>
<dbReference type="GO" id="GO:0005829">
    <property type="term" value="C:cytosol"/>
    <property type="evidence" value="ECO:0007669"/>
    <property type="project" value="TreeGrafter"/>
</dbReference>
<dbReference type="GO" id="GO:0005524">
    <property type="term" value="F:ATP binding"/>
    <property type="evidence" value="ECO:0007669"/>
    <property type="project" value="UniProtKB-UniRule"/>
</dbReference>
<dbReference type="GO" id="GO:0004798">
    <property type="term" value="F:dTMP kinase activity"/>
    <property type="evidence" value="ECO:0007669"/>
    <property type="project" value="UniProtKB-UniRule"/>
</dbReference>
<dbReference type="GO" id="GO:0006233">
    <property type="term" value="P:dTDP biosynthetic process"/>
    <property type="evidence" value="ECO:0007669"/>
    <property type="project" value="InterPro"/>
</dbReference>
<dbReference type="GO" id="GO:0006235">
    <property type="term" value="P:dTTP biosynthetic process"/>
    <property type="evidence" value="ECO:0007669"/>
    <property type="project" value="UniProtKB-UniRule"/>
</dbReference>
<dbReference type="GO" id="GO:0006227">
    <property type="term" value="P:dUDP biosynthetic process"/>
    <property type="evidence" value="ECO:0007669"/>
    <property type="project" value="TreeGrafter"/>
</dbReference>
<dbReference type="CDD" id="cd01672">
    <property type="entry name" value="TMPK"/>
    <property type="match status" value="1"/>
</dbReference>
<dbReference type="Gene3D" id="3.40.50.300">
    <property type="entry name" value="P-loop containing nucleotide triphosphate hydrolases"/>
    <property type="match status" value="1"/>
</dbReference>
<dbReference type="HAMAP" id="MF_00165">
    <property type="entry name" value="Thymidylate_kinase"/>
    <property type="match status" value="1"/>
</dbReference>
<dbReference type="InterPro" id="IPR027417">
    <property type="entry name" value="P-loop_NTPase"/>
</dbReference>
<dbReference type="InterPro" id="IPR039430">
    <property type="entry name" value="Thymidylate_kin-like_dom"/>
</dbReference>
<dbReference type="InterPro" id="IPR018094">
    <property type="entry name" value="Thymidylate_kinase"/>
</dbReference>
<dbReference type="NCBIfam" id="TIGR00041">
    <property type="entry name" value="DTMP_kinase"/>
    <property type="match status" value="1"/>
</dbReference>
<dbReference type="PANTHER" id="PTHR10344">
    <property type="entry name" value="THYMIDYLATE KINASE"/>
    <property type="match status" value="1"/>
</dbReference>
<dbReference type="PANTHER" id="PTHR10344:SF4">
    <property type="entry name" value="UMP-CMP KINASE 2, MITOCHONDRIAL"/>
    <property type="match status" value="1"/>
</dbReference>
<dbReference type="Pfam" id="PF02223">
    <property type="entry name" value="Thymidylate_kin"/>
    <property type="match status" value="1"/>
</dbReference>
<dbReference type="SUPFAM" id="SSF52540">
    <property type="entry name" value="P-loop containing nucleoside triphosphate hydrolases"/>
    <property type="match status" value="1"/>
</dbReference>
<reference key="1">
    <citation type="submission" date="2008-02" db="EMBL/GenBank/DDBJ databases">
        <title>Genome sequence of Ureaplasma parvum serovar 3.</title>
        <authorList>
            <person name="Methe B.A."/>
            <person name="Glass J."/>
            <person name="Waites K."/>
            <person name="Shrivastava S."/>
        </authorList>
    </citation>
    <scope>NUCLEOTIDE SEQUENCE [LARGE SCALE GENOMIC DNA]</scope>
    <source>
        <strain>ATCC 27815 / 27 / NCTC 11736</strain>
    </source>
</reference>
<sequence>MILTKNSNEKKPLKKGLFIVFEGIDGAGKTSILKQLLEVLKEPKLVNKIFLTREPGGKNNNAAEMIREFFLKNLEVFDPLTLAYLYASSRAEHVKKTINPHLEKDHIVISDRFVHSSYIYQGIVQNQSLDVIYQINQQAIGELEIDYVFYFDVNVNNALNRMKNRFDNTNAFDSQNKQFYEKLLKQYPSVFKVYNQPKKIIFIDANKNENEVLCEVKEQLLKIFKEHKYI</sequence>
<feature type="chain" id="PRO_1000076979" description="Thymidylate kinase">
    <location>
        <begin position="1"/>
        <end position="230"/>
    </location>
</feature>
<feature type="binding site" evidence="1">
    <location>
        <begin position="23"/>
        <end position="30"/>
    </location>
    <ligand>
        <name>ATP</name>
        <dbReference type="ChEBI" id="CHEBI:30616"/>
    </ligand>
</feature>
<keyword id="KW-0067">ATP-binding</keyword>
<keyword id="KW-0418">Kinase</keyword>
<keyword id="KW-0545">Nucleotide biosynthesis</keyword>
<keyword id="KW-0547">Nucleotide-binding</keyword>
<keyword id="KW-0808">Transferase</keyword>
<protein>
    <recommendedName>
        <fullName evidence="1">Thymidylate kinase</fullName>
        <ecNumber evidence="1">2.7.4.9</ecNumber>
    </recommendedName>
    <alternativeName>
        <fullName evidence="1">dTMP kinase</fullName>
    </alternativeName>
</protein>
<organism>
    <name type="scientific">Ureaplasma parvum serovar 3 (strain ATCC 27815 / 27 / NCTC 11736)</name>
    <dbReference type="NCBI Taxonomy" id="505682"/>
    <lineage>
        <taxon>Bacteria</taxon>
        <taxon>Bacillati</taxon>
        <taxon>Mycoplasmatota</taxon>
        <taxon>Mycoplasmoidales</taxon>
        <taxon>Mycoplasmoidaceae</taxon>
        <taxon>Ureaplasma</taxon>
    </lineage>
</organism>
<comment type="function">
    <text evidence="1">Phosphorylation of dTMP to form dTDP in both de novo and salvage pathways of dTTP synthesis.</text>
</comment>
<comment type="catalytic activity">
    <reaction evidence="1">
        <text>dTMP + ATP = dTDP + ADP</text>
        <dbReference type="Rhea" id="RHEA:13517"/>
        <dbReference type="ChEBI" id="CHEBI:30616"/>
        <dbReference type="ChEBI" id="CHEBI:58369"/>
        <dbReference type="ChEBI" id="CHEBI:63528"/>
        <dbReference type="ChEBI" id="CHEBI:456216"/>
        <dbReference type="EC" id="2.7.4.9"/>
    </reaction>
</comment>
<comment type="similarity">
    <text evidence="1">Belongs to the thymidylate kinase family.</text>
</comment>
<gene>
    <name evidence="1" type="primary">tmk</name>
    <name type="ordered locus">UPA3_0020</name>
</gene>
<evidence type="ECO:0000255" key="1">
    <source>
        <dbReference type="HAMAP-Rule" id="MF_00165"/>
    </source>
</evidence>
<name>KTHY_UREP2</name>